<protein>
    <recommendedName>
        <fullName evidence="1">Ribitol-5-phosphate cytidylyltransferase 2</fullName>
        <ecNumber evidence="1">2.7.7.40</ecNumber>
    </recommendedName>
</protein>
<accession>Q6GCM3</accession>
<reference key="1">
    <citation type="journal article" date="2004" name="Proc. Natl. Acad. Sci. U.S.A.">
        <title>Complete genomes of two clinical Staphylococcus aureus strains: evidence for the rapid evolution of virulence and drug resistance.</title>
        <authorList>
            <person name="Holden M.T.G."/>
            <person name="Feil E.J."/>
            <person name="Lindsay J.A."/>
            <person name="Peacock S.J."/>
            <person name="Day N.P.J."/>
            <person name="Enright M.C."/>
            <person name="Foster T.J."/>
            <person name="Moore C.E."/>
            <person name="Hurst L."/>
            <person name="Atkin R."/>
            <person name="Barron A."/>
            <person name="Bason N."/>
            <person name="Bentley S.D."/>
            <person name="Chillingworth C."/>
            <person name="Chillingworth T."/>
            <person name="Churcher C."/>
            <person name="Clark L."/>
            <person name="Corton C."/>
            <person name="Cronin A."/>
            <person name="Doggett J."/>
            <person name="Dowd L."/>
            <person name="Feltwell T."/>
            <person name="Hance Z."/>
            <person name="Harris B."/>
            <person name="Hauser H."/>
            <person name="Holroyd S."/>
            <person name="Jagels K."/>
            <person name="James K.D."/>
            <person name="Lennard N."/>
            <person name="Line A."/>
            <person name="Mayes R."/>
            <person name="Moule S."/>
            <person name="Mungall K."/>
            <person name="Ormond D."/>
            <person name="Quail M.A."/>
            <person name="Rabbinowitsch E."/>
            <person name="Rutherford K.M."/>
            <person name="Sanders M."/>
            <person name="Sharp S."/>
            <person name="Simmonds M."/>
            <person name="Stevens K."/>
            <person name="Whitehead S."/>
            <person name="Barrell B.G."/>
            <person name="Spratt B.G."/>
            <person name="Parkhill J."/>
        </authorList>
    </citation>
    <scope>NUCLEOTIDE SEQUENCE [LARGE SCALE GENOMIC DNA]</scope>
    <source>
        <strain>MSSA476</strain>
    </source>
</reference>
<comment type="function">
    <text evidence="1">Catalyzes the transfer of the cytidylyl group of CTP to D-ribitol 5-phosphate.</text>
</comment>
<comment type="catalytic activity">
    <reaction evidence="1">
        <text>D-ribitol 5-phosphate + CTP + H(+) = CDP-L-ribitol + diphosphate</text>
        <dbReference type="Rhea" id="RHEA:12456"/>
        <dbReference type="ChEBI" id="CHEBI:15378"/>
        <dbReference type="ChEBI" id="CHEBI:33019"/>
        <dbReference type="ChEBI" id="CHEBI:37563"/>
        <dbReference type="ChEBI" id="CHEBI:57608"/>
        <dbReference type="ChEBI" id="CHEBI:57695"/>
        <dbReference type="EC" id="2.7.7.40"/>
    </reaction>
</comment>
<comment type="pathway">
    <text evidence="1">Cell wall biogenesis; poly(ribitol phosphate) teichoic acid biosynthesis.</text>
</comment>
<comment type="similarity">
    <text evidence="1">Belongs to the IspD/TarI cytidylyltransferase family. TarI subfamily.</text>
</comment>
<feature type="chain" id="PRO_0000075621" description="Ribitol-5-phosphate cytidylyltransferase 2">
    <location>
        <begin position="1"/>
        <end position="238"/>
    </location>
</feature>
<feature type="binding site" evidence="1">
    <location>
        <begin position="7"/>
        <end position="10"/>
    </location>
    <ligand>
        <name>CTP</name>
        <dbReference type="ChEBI" id="CHEBI:37563"/>
    </ligand>
</feature>
<feature type="binding site" evidence="1">
    <location>
        <begin position="81"/>
        <end position="87"/>
    </location>
    <ligand>
        <name>CTP</name>
        <dbReference type="ChEBI" id="CHEBI:37563"/>
    </ligand>
</feature>
<feature type="site" description="Transition state stabilizer" evidence="1">
    <location>
        <position position="14"/>
    </location>
</feature>
<feature type="site" description="Transition state stabilizer" evidence="1">
    <location>
        <position position="22"/>
    </location>
</feature>
<feature type="site" description="Positions ribitol 5-phosphate for the nucleophilic attack" evidence="1">
    <location>
        <position position="160"/>
    </location>
</feature>
<feature type="site" description="Positions ribitol 5-phosphate for the nucleophilic attack" evidence="1">
    <location>
        <position position="217"/>
    </location>
</feature>
<gene>
    <name evidence="1" type="primary">tarI2</name>
    <name type="ordered locus">SAS0227</name>
</gene>
<proteinExistence type="inferred from homology"/>
<dbReference type="EC" id="2.7.7.40" evidence="1"/>
<dbReference type="EMBL" id="BX571857">
    <property type="protein sequence ID" value="CAG41996.1"/>
    <property type="molecule type" value="Genomic_DNA"/>
</dbReference>
<dbReference type="RefSeq" id="WP_000638479.1">
    <property type="nucleotide sequence ID" value="NC_002953.3"/>
</dbReference>
<dbReference type="SMR" id="Q6GCM3"/>
<dbReference type="KEGG" id="sas:SAS0227"/>
<dbReference type="HOGENOM" id="CLU_061281_2_3_9"/>
<dbReference type="UniPathway" id="UPA00790"/>
<dbReference type="GO" id="GO:0050518">
    <property type="term" value="F:2-C-methyl-D-erythritol 4-phosphate cytidylyltransferase activity"/>
    <property type="evidence" value="ECO:0007669"/>
    <property type="project" value="TreeGrafter"/>
</dbReference>
<dbReference type="GO" id="GO:0047349">
    <property type="term" value="F:D-ribitol-5-phosphate cytidylyltransferase activity"/>
    <property type="evidence" value="ECO:0007669"/>
    <property type="project" value="UniProtKB-UniRule"/>
</dbReference>
<dbReference type="GO" id="GO:0071555">
    <property type="term" value="P:cell wall organization"/>
    <property type="evidence" value="ECO:0007669"/>
    <property type="project" value="UniProtKB-KW"/>
</dbReference>
<dbReference type="GO" id="GO:0008299">
    <property type="term" value="P:isoprenoid biosynthetic process"/>
    <property type="evidence" value="ECO:0007669"/>
    <property type="project" value="InterPro"/>
</dbReference>
<dbReference type="GO" id="GO:1902012">
    <property type="term" value="P:poly(ribitol phosphate) teichoic acid biosynthetic process"/>
    <property type="evidence" value="ECO:0007669"/>
    <property type="project" value="UniProtKB-UniRule"/>
</dbReference>
<dbReference type="CDD" id="cd02516">
    <property type="entry name" value="CDP-ME_synthetase"/>
    <property type="match status" value="1"/>
</dbReference>
<dbReference type="FunFam" id="3.90.550.10:FF:000003">
    <property type="entry name" value="2-C-methyl-D-erythritol 4-phosphate cytidylyltransferase"/>
    <property type="match status" value="1"/>
</dbReference>
<dbReference type="Gene3D" id="3.90.550.10">
    <property type="entry name" value="Spore Coat Polysaccharide Biosynthesis Protein SpsA, Chain A"/>
    <property type="match status" value="1"/>
</dbReference>
<dbReference type="HAMAP" id="MF_02068">
    <property type="entry name" value="TarI"/>
    <property type="match status" value="1"/>
</dbReference>
<dbReference type="InterPro" id="IPR034683">
    <property type="entry name" value="IspD/TarI"/>
</dbReference>
<dbReference type="InterPro" id="IPR050088">
    <property type="entry name" value="IspD/TarI_cytidylyltransf_bact"/>
</dbReference>
<dbReference type="InterPro" id="IPR018294">
    <property type="entry name" value="ISPD_synthase_CS"/>
</dbReference>
<dbReference type="InterPro" id="IPR029044">
    <property type="entry name" value="Nucleotide-diphossugar_trans"/>
</dbReference>
<dbReference type="InterPro" id="IPR034709">
    <property type="entry name" value="TarI"/>
</dbReference>
<dbReference type="NCBIfam" id="NF001183">
    <property type="entry name" value="PRK00155.1-3"/>
    <property type="match status" value="1"/>
</dbReference>
<dbReference type="NCBIfam" id="NF009924">
    <property type="entry name" value="PRK13385.1"/>
    <property type="match status" value="1"/>
</dbReference>
<dbReference type="PANTHER" id="PTHR32125">
    <property type="entry name" value="2-C-METHYL-D-ERYTHRITOL 4-PHOSPHATE CYTIDYLYLTRANSFERASE, CHLOROPLASTIC"/>
    <property type="match status" value="1"/>
</dbReference>
<dbReference type="PANTHER" id="PTHR32125:SF8">
    <property type="entry name" value="RIBITOL-5-PHOSPHATE CYTIDYLYLTRANSFERASE"/>
    <property type="match status" value="1"/>
</dbReference>
<dbReference type="Pfam" id="PF01128">
    <property type="entry name" value="IspD"/>
    <property type="match status" value="1"/>
</dbReference>
<dbReference type="SUPFAM" id="SSF53448">
    <property type="entry name" value="Nucleotide-diphospho-sugar transferases"/>
    <property type="match status" value="1"/>
</dbReference>
<dbReference type="PROSITE" id="PS01295">
    <property type="entry name" value="ISPD"/>
    <property type="match status" value="1"/>
</dbReference>
<evidence type="ECO:0000255" key="1">
    <source>
        <dbReference type="HAMAP-Rule" id="MF_02068"/>
    </source>
</evidence>
<keyword id="KW-0961">Cell wall biogenesis/degradation</keyword>
<keyword id="KW-0548">Nucleotidyltransferase</keyword>
<keyword id="KW-0777">Teichoic acid biosynthesis</keyword>
<keyword id="KW-0808">Transferase</keyword>
<organism>
    <name type="scientific">Staphylococcus aureus (strain MSSA476)</name>
    <dbReference type="NCBI Taxonomy" id="282459"/>
    <lineage>
        <taxon>Bacteria</taxon>
        <taxon>Bacillati</taxon>
        <taxon>Bacillota</taxon>
        <taxon>Bacilli</taxon>
        <taxon>Bacillales</taxon>
        <taxon>Staphylococcaceae</taxon>
        <taxon>Staphylococcus</taxon>
    </lineage>
</organism>
<name>TARI2_STAAS</name>
<sequence length="238" mass="26627">MIYAGILAGGIGSRMGNVPLPKQFLDIDNKPILIHTIEKFILVSEFNEIIIATPAQWISHTQDILKKYNITDQRVKVVAGGTDRNETIMNIIDYIRNVNGINNDDVIVTHDAVRPFLTQRIIKENIEVAEKYGAVDTVIEAIDTIVMSKDKQNIHSIPVRNEMYQGQTPQSFNIKLLQDSYRALSSAQKEILSDACKIIVESGHPVKLVRGELYNIKVTTPYDLKVANAIIQGDIADD</sequence>